<feature type="chain" id="PRO_0000386074" description="GTPase Obg">
    <location>
        <begin position="1"/>
        <end position="433"/>
    </location>
</feature>
<feature type="domain" description="Obg" evidence="3">
    <location>
        <begin position="1"/>
        <end position="159"/>
    </location>
</feature>
<feature type="domain" description="OBG-type G" evidence="1">
    <location>
        <begin position="160"/>
        <end position="332"/>
    </location>
</feature>
<feature type="domain" description="OCT" evidence="2">
    <location>
        <begin position="355"/>
        <end position="433"/>
    </location>
</feature>
<feature type="binding site" evidence="1">
    <location>
        <begin position="166"/>
        <end position="173"/>
    </location>
    <ligand>
        <name>GTP</name>
        <dbReference type="ChEBI" id="CHEBI:37565"/>
    </ligand>
</feature>
<feature type="binding site" evidence="1">
    <location>
        <position position="173"/>
    </location>
    <ligand>
        <name>Mg(2+)</name>
        <dbReference type="ChEBI" id="CHEBI:18420"/>
    </ligand>
</feature>
<feature type="binding site" evidence="1">
    <location>
        <begin position="191"/>
        <end position="195"/>
    </location>
    <ligand>
        <name>GTP</name>
        <dbReference type="ChEBI" id="CHEBI:37565"/>
    </ligand>
</feature>
<feature type="binding site" evidence="1">
    <location>
        <position position="193"/>
    </location>
    <ligand>
        <name>Mg(2+)</name>
        <dbReference type="ChEBI" id="CHEBI:18420"/>
    </ligand>
</feature>
<feature type="binding site" evidence="1">
    <location>
        <begin position="213"/>
        <end position="216"/>
    </location>
    <ligand>
        <name>GTP</name>
        <dbReference type="ChEBI" id="CHEBI:37565"/>
    </ligand>
</feature>
<feature type="binding site" evidence="1">
    <location>
        <begin position="284"/>
        <end position="287"/>
    </location>
    <ligand>
        <name>GTP</name>
        <dbReference type="ChEBI" id="CHEBI:37565"/>
    </ligand>
</feature>
<feature type="binding site" evidence="1">
    <location>
        <begin position="313"/>
        <end position="315"/>
    </location>
    <ligand>
        <name>GTP</name>
        <dbReference type="ChEBI" id="CHEBI:37565"/>
    </ligand>
</feature>
<gene>
    <name evidence="1" type="primary">obg</name>
    <name type="ordered locus">MSC_0439</name>
</gene>
<accession>Q6MTG9</accession>
<name>OBG_MYCMS</name>
<comment type="function">
    <text evidence="1">An essential GTPase which binds GTP, GDP and possibly (p)ppGpp with moderate affinity, with high nucleotide exchange rates and a fairly low GTP hydrolysis rate. Plays a role in control of the cell cycle, stress response, ribosome biogenesis and in those bacteria that undergo differentiation, in morphogenesis control.</text>
</comment>
<comment type="cofactor">
    <cofactor evidence="1">
        <name>Mg(2+)</name>
        <dbReference type="ChEBI" id="CHEBI:18420"/>
    </cofactor>
</comment>
<comment type="subunit">
    <text evidence="1">Monomer.</text>
</comment>
<comment type="subcellular location">
    <subcellularLocation>
        <location evidence="1">Cytoplasm</location>
    </subcellularLocation>
</comment>
<comment type="similarity">
    <text evidence="1">Belongs to the TRAFAC class OBG-HflX-like GTPase superfamily. OBG GTPase family.</text>
</comment>
<sequence length="433" mass="48344">MKFVDSADLIIKAGKGGDGAVSFLHALFVPNGGPNGGDGGDGGSVYFQGDEGKHSLLDLKLQKKYSAQDGFKGDIKNMHGAKGEDKIIKVPVGTILYDKKTNNILADINENNKLVLIAKGGKGGKGNARFANSRNKAPTIFEAGELGQEFEIRAELKVLADVGFVGLPNAGKSTLLRAISNSKPVVADYPFTTITPQLGVARTKNNDTFIVADLPGLIQGASLGKGLGHQFLKHIERCLVICHIIDASGNFGSEDIIKNYELIRNELKTYNLNLEKRAEIIVLNKMDLDEAQLNLLDEKIINYFKNKKVIQISGLKKENIDQLLFMIYEELKVAKKQSLWELDKNNNQDEMVIYKFEEQKEDIQAYNKGNNRWEIAGETIFKIYQKFPIWTEDNLLMFNEKLKETGVYETLVKKGIKKGDFVKVFDYELEWTD</sequence>
<reference key="1">
    <citation type="journal article" date="2004" name="Genome Res.">
        <title>The genome sequence of Mycoplasma mycoides subsp. mycoides SC type strain PG1T, the causative agent of contagious bovine pleuropneumonia (CBPP).</title>
        <authorList>
            <person name="Westberg J."/>
            <person name="Persson A."/>
            <person name="Holmberg A."/>
            <person name="Goesmann A."/>
            <person name="Lundeberg J."/>
            <person name="Johansson K.-E."/>
            <person name="Pettersson B."/>
            <person name="Uhlen M."/>
        </authorList>
    </citation>
    <scope>NUCLEOTIDE SEQUENCE [LARGE SCALE GENOMIC DNA]</scope>
    <source>
        <strain>CCUG 32753 / NCTC 10114 / PG1</strain>
    </source>
</reference>
<proteinExistence type="inferred from homology"/>
<keyword id="KW-0963">Cytoplasm</keyword>
<keyword id="KW-0342">GTP-binding</keyword>
<keyword id="KW-0378">Hydrolase</keyword>
<keyword id="KW-0460">Magnesium</keyword>
<keyword id="KW-0479">Metal-binding</keyword>
<keyword id="KW-0547">Nucleotide-binding</keyword>
<keyword id="KW-1185">Reference proteome</keyword>
<organism>
    <name type="scientific">Mycoplasma mycoides subsp. mycoides SC (strain CCUG 32753 / NCTC 10114 / PG1)</name>
    <dbReference type="NCBI Taxonomy" id="272632"/>
    <lineage>
        <taxon>Bacteria</taxon>
        <taxon>Bacillati</taxon>
        <taxon>Mycoplasmatota</taxon>
        <taxon>Mollicutes</taxon>
        <taxon>Mycoplasmataceae</taxon>
        <taxon>Mycoplasma</taxon>
    </lineage>
</organism>
<evidence type="ECO:0000255" key="1">
    <source>
        <dbReference type="HAMAP-Rule" id="MF_01454"/>
    </source>
</evidence>
<evidence type="ECO:0000255" key="2">
    <source>
        <dbReference type="PROSITE-ProRule" id="PRU01229"/>
    </source>
</evidence>
<evidence type="ECO:0000255" key="3">
    <source>
        <dbReference type="PROSITE-ProRule" id="PRU01231"/>
    </source>
</evidence>
<protein>
    <recommendedName>
        <fullName evidence="1">GTPase Obg</fullName>
        <ecNumber evidence="1">3.6.5.-</ecNumber>
    </recommendedName>
    <alternativeName>
        <fullName evidence="1">GTP-binding protein Obg</fullName>
    </alternativeName>
</protein>
<dbReference type="EC" id="3.6.5.-" evidence="1"/>
<dbReference type="EMBL" id="BX293980">
    <property type="protein sequence ID" value="CAE77067.1"/>
    <property type="molecule type" value="Genomic_DNA"/>
</dbReference>
<dbReference type="RefSeq" id="NP_975425.1">
    <property type="nucleotide sequence ID" value="NC_005364.2"/>
</dbReference>
<dbReference type="RefSeq" id="WP_011166623.1">
    <property type="nucleotide sequence ID" value="NC_005364.2"/>
</dbReference>
<dbReference type="SMR" id="Q6MTG9"/>
<dbReference type="STRING" id="272632.MSC_0439"/>
<dbReference type="KEGG" id="mmy:MSC_0439"/>
<dbReference type="PATRIC" id="fig|272632.4.peg.480"/>
<dbReference type="eggNOG" id="COG0536">
    <property type="taxonomic scope" value="Bacteria"/>
</dbReference>
<dbReference type="HOGENOM" id="CLU_011747_2_1_14"/>
<dbReference type="Proteomes" id="UP000001016">
    <property type="component" value="Chromosome"/>
</dbReference>
<dbReference type="GO" id="GO:0005737">
    <property type="term" value="C:cytoplasm"/>
    <property type="evidence" value="ECO:0007669"/>
    <property type="project" value="UniProtKB-SubCell"/>
</dbReference>
<dbReference type="GO" id="GO:0005525">
    <property type="term" value="F:GTP binding"/>
    <property type="evidence" value="ECO:0007669"/>
    <property type="project" value="UniProtKB-UniRule"/>
</dbReference>
<dbReference type="GO" id="GO:0003924">
    <property type="term" value="F:GTPase activity"/>
    <property type="evidence" value="ECO:0007669"/>
    <property type="project" value="UniProtKB-UniRule"/>
</dbReference>
<dbReference type="GO" id="GO:0000287">
    <property type="term" value="F:magnesium ion binding"/>
    <property type="evidence" value="ECO:0007669"/>
    <property type="project" value="InterPro"/>
</dbReference>
<dbReference type="GO" id="GO:0042254">
    <property type="term" value="P:ribosome biogenesis"/>
    <property type="evidence" value="ECO:0007669"/>
    <property type="project" value="UniProtKB-UniRule"/>
</dbReference>
<dbReference type="CDD" id="cd01898">
    <property type="entry name" value="Obg"/>
    <property type="match status" value="1"/>
</dbReference>
<dbReference type="FunFam" id="2.70.210.12:FF:000001">
    <property type="entry name" value="GTPase Obg"/>
    <property type="match status" value="1"/>
</dbReference>
<dbReference type="Gene3D" id="3.30.300.350">
    <property type="entry name" value="GTP-binding protein OBG, C-terminal domain"/>
    <property type="match status" value="1"/>
</dbReference>
<dbReference type="Gene3D" id="2.70.210.12">
    <property type="entry name" value="GTP1/OBG domain"/>
    <property type="match status" value="1"/>
</dbReference>
<dbReference type="Gene3D" id="3.40.50.300">
    <property type="entry name" value="P-loop containing nucleotide triphosphate hydrolases"/>
    <property type="match status" value="1"/>
</dbReference>
<dbReference type="HAMAP" id="MF_01454">
    <property type="entry name" value="GTPase_Obg"/>
    <property type="match status" value="1"/>
</dbReference>
<dbReference type="InterPro" id="IPR031167">
    <property type="entry name" value="G_OBG"/>
</dbReference>
<dbReference type="InterPro" id="IPR006073">
    <property type="entry name" value="GTP-bd"/>
</dbReference>
<dbReference type="InterPro" id="IPR014100">
    <property type="entry name" value="GTP-bd_Obg/CgtA"/>
</dbReference>
<dbReference type="InterPro" id="IPR036346">
    <property type="entry name" value="GTP-bd_prot_GTP1/OBG_C_sf"/>
</dbReference>
<dbReference type="InterPro" id="IPR006074">
    <property type="entry name" value="GTP1-OBG_CS"/>
</dbReference>
<dbReference type="InterPro" id="IPR006169">
    <property type="entry name" value="GTP1_OBG_dom"/>
</dbReference>
<dbReference type="InterPro" id="IPR036726">
    <property type="entry name" value="GTP1_OBG_dom_sf"/>
</dbReference>
<dbReference type="InterPro" id="IPR045086">
    <property type="entry name" value="OBG_GTPase"/>
</dbReference>
<dbReference type="InterPro" id="IPR015349">
    <property type="entry name" value="OCT_dom"/>
</dbReference>
<dbReference type="InterPro" id="IPR027417">
    <property type="entry name" value="P-loop_NTPase"/>
</dbReference>
<dbReference type="InterPro" id="IPR005225">
    <property type="entry name" value="Small_GTP-bd"/>
</dbReference>
<dbReference type="NCBIfam" id="TIGR02729">
    <property type="entry name" value="Obg_CgtA"/>
    <property type="match status" value="1"/>
</dbReference>
<dbReference type="NCBIfam" id="TIGR03595">
    <property type="entry name" value="Obg_CgtA_exten"/>
    <property type="match status" value="1"/>
</dbReference>
<dbReference type="NCBIfam" id="NF008955">
    <property type="entry name" value="PRK12297.1"/>
    <property type="match status" value="1"/>
</dbReference>
<dbReference type="NCBIfam" id="NF008956">
    <property type="entry name" value="PRK12299.1"/>
    <property type="match status" value="1"/>
</dbReference>
<dbReference type="NCBIfam" id="TIGR00231">
    <property type="entry name" value="small_GTP"/>
    <property type="match status" value="1"/>
</dbReference>
<dbReference type="PANTHER" id="PTHR11702">
    <property type="entry name" value="DEVELOPMENTALLY REGULATED GTP-BINDING PROTEIN-RELATED"/>
    <property type="match status" value="1"/>
</dbReference>
<dbReference type="PANTHER" id="PTHR11702:SF31">
    <property type="entry name" value="MITOCHONDRIAL RIBOSOME-ASSOCIATED GTPASE 2"/>
    <property type="match status" value="1"/>
</dbReference>
<dbReference type="Pfam" id="PF09269">
    <property type="entry name" value="DUF1967"/>
    <property type="match status" value="1"/>
</dbReference>
<dbReference type="Pfam" id="PF01018">
    <property type="entry name" value="GTP1_OBG"/>
    <property type="match status" value="1"/>
</dbReference>
<dbReference type="Pfam" id="PF01926">
    <property type="entry name" value="MMR_HSR1"/>
    <property type="match status" value="1"/>
</dbReference>
<dbReference type="PIRSF" id="PIRSF002401">
    <property type="entry name" value="GTP_bd_Obg/CgtA"/>
    <property type="match status" value="1"/>
</dbReference>
<dbReference type="PRINTS" id="PR00326">
    <property type="entry name" value="GTP1OBG"/>
</dbReference>
<dbReference type="SUPFAM" id="SSF102741">
    <property type="entry name" value="Obg GTP-binding protein C-terminal domain"/>
    <property type="match status" value="1"/>
</dbReference>
<dbReference type="SUPFAM" id="SSF82051">
    <property type="entry name" value="Obg GTP-binding protein N-terminal domain"/>
    <property type="match status" value="1"/>
</dbReference>
<dbReference type="SUPFAM" id="SSF52540">
    <property type="entry name" value="P-loop containing nucleoside triphosphate hydrolases"/>
    <property type="match status" value="1"/>
</dbReference>
<dbReference type="PROSITE" id="PS51710">
    <property type="entry name" value="G_OBG"/>
    <property type="match status" value="1"/>
</dbReference>
<dbReference type="PROSITE" id="PS00905">
    <property type="entry name" value="GTP1_OBG"/>
    <property type="match status" value="1"/>
</dbReference>
<dbReference type="PROSITE" id="PS51883">
    <property type="entry name" value="OBG"/>
    <property type="match status" value="1"/>
</dbReference>
<dbReference type="PROSITE" id="PS51881">
    <property type="entry name" value="OCT"/>
    <property type="match status" value="1"/>
</dbReference>